<sequence length="487" mass="53469">MKKLPNKSLIALALLSVSGASFGHGYVSAYENGVAEGRATLCRVPANDTNEKNTNCGGIEYEPQSVEGPDGFPETGPRDGKIASAENSLAAALDEQTADRWVKRPIQSGNQHFEWNFTANHITKDWKYYITKADWNPNQPLARDSFDLNPFCVVDGGMVKPPMRVSHLCNVPEREGYQVILAVWDVGDTAASFYNVIDVKFDGDSPVLPDWNQGGQIYPSQDLNVGDSVYTRVFGQNGENVSYSTELVIDSEELGAANNWSHALATKINQEQTMLQAGQLNAEGVISPIYGTNPIYLKQGSGLKNVEIDYKINSTAPEYDLEVYGLESEYIIGDSATQLDLTLEATGDIKTEMTVYNHHHESLSSHSAELSDGQVEAATMTLSKSEPGHHMLVVVVKDQQGKVIEQNTLDFHLIEEQTPPPSGEYDFVFPEGLNTYTAGTKVLASDGAVYQCKEFPFSGYCTQWSPSATQFEPGKGSHWSEAWNKVN</sequence>
<dbReference type="EMBL" id="CP000790">
    <property type="protein sequence ID" value="ABU72648.1"/>
    <property type="molecule type" value="Genomic_DNA"/>
</dbReference>
<dbReference type="RefSeq" id="WP_011999056.1">
    <property type="nucleotide sequence ID" value="NC_009784.1"/>
</dbReference>
<dbReference type="PDB" id="8GUL">
    <property type="method" value="X-ray"/>
    <property type="resolution" value="2.44 A"/>
    <property type="chains" value="A/B=24-487"/>
</dbReference>
<dbReference type="PDB" id="8GUM">
    <property type="method" value="X-ray"/>
    <property type="resolution" value="2.35 A"/>
    <property type="chains" value="A/B=24-487"/>
</dbReference>
<dbReference type="PDBsum" id="8GUL"/>
<dbReference type="PDBsum" id="8GUM"/>
<dbReference type="SMR" id="A7N3J0"/>
<dbReference type="CAZy" id="AA10">
    <property type="family name" value="Auxiliary Activities 10"/>
</dbReference>
<dbReference type="CAZy" id="CBM73">
    <property type="family name" value="Carbohydrate-Binding Module Family 73"/>
</dbReference>
<dbReference type="KEGG" id="vha:VIBHAR_04739"/>
<dbReference type="PATRIC" id="fig|338187.36.peg.3632"/>
<dbReference type="Proteomes" id="UP000008152">
    <property type="component" value="Chromosome II"/>
</dbReference>
<dbReference type="GO" id="GO:0005576">
    <property type="term" value="C:extracellular region"/>
    <property type="evidence" value="ECO:0007669"/>
    <property type="project" value="UniProtKB-SubCell"/>
</dbReference>
<dbReference type="GO" id="GO:0008061">
    <property type="term" value="F:chitin binding"/>
    <property type="evidence" value="ECO:0007669"/>
    <property type="project" value="UniProtKB-UniRule"/>
</dbReference>
<dbReference type="CDD" id="cd21177">
    <property type="entry name" value="LPMO_AA10"/>
    <property type="match status" value="1"/>
</dbReference>
<dbReference type="FunFam" id="2.70.50.50:FF:000001">
    <property type="entry name" value="Chitin-binding protein"/>
    <property type="match status" value="1"/>
</dbReference>
<dbReference type="Gene3D" id="2.60.40.2550">
    <property type="match status" value="1"/>
</dbReference>
<dbReference type="Gene3D" id="3.30.70.2150">
    <property type="match status" value="1"/>
</dbReference>
<dbReference type="Gene3D" id="2.70.50.50">
    <property type="entry name" value="chitin-binding protein cbp21"/>
    <property type="match status" value="1"/>
</dbReference>
<dbReference type="HAMAP" id="MF_01905">
    <property type="entry name" value="GbpA"/>
    <property type="match status" value="1"/>
</dbReference>
<dbReference type="InterPro" id="IPR004302">
    <property type="entry name" value="Cellulose/chitin-bd_N"/>
</dbReference>
<dbReference type="InterPro" id="IPR041029">
    <property type="entry name" value="GbpA_2"/>
</dbReference>
<dbReference type="InterPro" id="IPR054063">
    <property type="entry name" value="GbpA_D3"/>
</dbReference>
<dbReference type="InterPro" id="IPR020879">
    <property type="entry name" value="GlcNAc-bd_A"/>
</dbReference>
<dbReference type="InterPro" id="IPR051024">
    <property type="entry name" value="GlcNAc_Chitin_IntDeg"/>
</dbReference>
<dbReference type="InterPro" id="IPR014756">
    <property type="entry name" value="Ig_E-set"/>
</dbReference>
<dbReference type="NCBIfam" id="NF009690">
    <property type="entry name" value="PRK13211.1"/>
    <property type="match status" value="1"/>
</dbReference>
<dbReference type="PANTHER" id="PTHR34823:SF1">
    <property type="entry name" value="CHITIN-BINDING TYPE-4 DOMAIN-CONTAINING PROTEIN"/>
    <property type="match status" value="1"/>
</dbReference>
<dbReference type="PANTHER" id="PTHR34823">
    <property type="entry name" value="GLCNAC-BINDING PROTEIN A"/>
    <property type="match status" value="1"/>
</dbReference>
<dbReference type="Pfam" id="PF18416">
    <property type="entry name" value="GbpA_2"/>
    <property type="match status" value="1"/>
</dbReference>
<dbReference type="Pfam" id="PF21868">
    <property type="entry name" value="GbpA_D3"/>
    <property type="match status" value="1"/>
</dbReference>
<dbReference type="Pfam" id="PF03067">
    <property type="entry name" value="LPMO_10"/>
    <property type="match status" value="1"/>
</dbReference>
<dbReference type="SUPFAM" id="SSF81296">
    <property type="entry name" value="E set domains"/>
    <property type="match status" value="1"/>
</dbReference>
<reference key="1">
    <citation type="submission" date="2007-08" db="EMBL/GenBank/DDBJ databases">
        <authorList>
            <consortium name="The Vibrio harveyi Genome Sequencing Project"/>
            <person name="Bassler B."/>
            <person name="Clifton S.W."/>
            <person name="Fulton L."/>
            <person name="Delehaunty K."/>
            <person name="Fronick C."/>
            <person name="Harrison M."/>
            <person name="Markivic C."/>
            <person name="Fulton R."/>
            <person name="Tin-Wollam A.-M."/>
            <person name="Shah N."/>
            <person name="Pepin K."/>
            <person name="Nash W."/>
            <person name="Thiruvilangam P."/>
            <person name="Bhonagiri V."/>
            <person name="Waters C."/>
            <person name="Tu K.C."/>
            <person name="Irgon J."/>
            <person name="Wilson R.K."/>
        </authorList>
    </citation>
    <scope>NUCLEOTIDE SEQUENCE [LARGE SCALE GENOMIC DNA]</scope>
    <source>
        <strain>ATCC BAA-1116 / BB120</strain>
    </source>
</reference>
<proteinExistence type="evidence at protein level"/>
<comment type="function">
    <text evidence="1">Probably interacts with GlcNAc residues. May promote attachment to both epithelial cell surfaces and chitin.</text>
</comment>
<comment type="subcellular location">
    <subcellularLocation>
        <location evidence="1">Secreted</location>
    </subcellularLocation>
</comment>
<comment type="similarity">
    <text evidence="1">Belongs to the GbpA family.</text>
</comment>
<organism>
    <name type="scientific">Vibrio campbellii (strain ATCC BAA-1116)</name>
    <dbReference type="NCBI Taxonomy" id="2902295"/>
    <lineage>
        <taxon>Bacteria</taxon>
        <taxon>Pseudomonadati</taxon>
        <taxon>Pseudomonadota</taxon>
        <taxon>Gammaproteobacteria</taxon>
        <taxon>Vibrionales</taxon>
        <taxon>Vibrionaceae</taxon>
        <taxon>Vibrio</taxon>
    </lineage>
</organism>
<name>GBPA_VIBC1</name>
<feature type="signal peptide" evidence="1">
    <location>
        <begin position="1"/>
        <end position="29"/>
    </location>
</feature>
<feature type="chain" id="PRO_1000073696" description="GlcNAc-binding protein A">
    <location>
        <begin position="30"/>
        <end position="487"/>
    </location>
</feature>
<feature type="domain" description="Chitin-binding type-4" evidence="1">
    <location>
        <begin position="30"/>
        <end position="201"/>
    </location>
</feature>
<feature type="domain" description="Chitin-binding type-3" evidence="1">
    <location>
        <begin position="438"/>
        <end position="479"/>
    </location>
</feature>
<feature type="strand" evidence="3">
    <location>
        <begin position="25"/>
        <end position="28"/>
    </location>
</feature>
<feature type="strand" evidence="3">
    <location>
        <begin position="30"/>
        <end position="32"/>
    </location>
</feature>
<feature type="helix" evidence="3">
    <location>
        <begin position="40"/>
        <end position="42"/>
    </location>
</feature>
<feature type="turn" evidence="3">
    <location>
        <begin position="47"/>
        <end position="49"/>
    </location>
</feature>
<feature type="helix" evidence="3">
    <location>
        <begin position="57"/>
        <end position="61"/>
    </location>
</feature>
<feature type="helix" evidence="3">
    <location>
        <begin position="63"/>
        <end position="65"/>
    </location>
</feature>
<feature type="strand" evidence="3">
    <location>
        <begin position="67"/>
        <end position="70"/>
    </location>
</feature>
<feature type="turn" evidence="3">
    <location>
        <begin position="72"/>
        <end position="74"/>
    </location>
</feature>
<feature type="strand" evidence="3">
    <location>
        <begin position="75"/>
        <end position="77"/>
    </location>
</feature>
<feature type="turn" evidence="3">
    <location>
        <begin position="82"/>
        <end position="86"/>
    </location>
</feature>
<feature type="helix" evidence="3">
    <location>
        <begin position="88"/>
        <end position="94"/>
    </location>
</feature>
<feature type="strand" evidence="3">
    <location>
        <begin position="104"/>
        <end position="106"/>
    </location>
</feature>
<feature type="strand" evidence="3">
    <location>
        <begin position="108"/>
        <end position="119"/>
    </location>
</feature>
<feature type="strand" evidence="3">
    <location>
        <begin position="123"/>
        <end position="131"/>
    </location>
</feature>
<feature type="helix" evidence="3">
    <location>
        <begin position="143"/>
        <end position="145"/>
    </location>
</feature>
<feature type="strand" evidence="3">
    <location>
        <begin position="151"/>
        <end position="159"/>
    </location>
</feature>
<feature type="strand" evidence="3">
    <location>
        <begin position="163"/>
        <end position="171"/>
    </location>
</feature>
<feature type="strand" evidence="3">
    <location>
        <begin position="176"/>
        <end position="186"/>
    </location>
</feature>
<feature type="strand" evidence="3">
    <location>
        <begin position="189"/>
        <end position="201"/>
    </location>
</feature>
<feature type="strand" evidence="3">
    <location>
        <begin position="211"/>
        <end position="217"/>
    </location>
</feature>
<feature type="strand" evidence="3">
    <location>
        <begin position="228"/>
        <end position="235"/>
    </location>
</feature>
<feature type="helix" evidence="2">
    <location>
        <begin position="241"/>
        <end position="243"/>
    </location>
</feature>
<feature type="strand" evidence="3">
    <location>
        <begin position="246"/>
        <end position="248"/>
    </location>
</feature>
<feature type="helix" evidence="3">
    <location>
        <begin position="253"/>
        <end position="255"/>
    </location>
</feature>
<feature type="helix" evidence="3">
    <location>
        <begin position="257"/>
        <end position="271"/>
    </location>
</feature>
<feature type="strand" evidence="3">
    <location>
        <begin position="273"/>
        <end position="280"/>
    </location>
</feature>
<feature type="strand" evidence="3">
    <location>
        <begin position="293"/>
        <end position="298"/>
    </location>
</feature>
<feature type="strand" evidence="3">
    <location>
        <begin position="305"/>
        <end position="311"/>
    </location>
</feature>
<feature type="strand" evidence="3">
    <location>
        <begin position="320"/>
        <end position="324"/>
    </location>
</feature>
<feature type="strand" evidence="3">
    <location>
        <begin position="328"/>
        <end position="331"/>
    </location>
</feature>
<feature type="strand" evidence="3">
    <location>
        <begin position="338"/>
        <end position="357"/>
    </location>
</feature>
<feature type="strand" evidence="3">
    <location>
        <begin position="362"/>
        <end position="369"/>
    </location>
</feature>
<feature type="strand" evidence="3">
    <location>
        <begin position="375"/>
        <end position="381"/>
    </location>
</feature>
<feature type="strand" evidence="3">
    <location>
        <begin position="387"/>
        <end position="398"/>
    </location>
</feature>
<feature type="strand" evidence="3">
    <location>
        <begin position="403"/>
        <end position="414"/>
    </location>
</feature>
<feature type="strand" evidence="3">
    <location>
        <begin position="426"/>
        <end position="428"/>
    </location>
</feature>
<feature type="turn" evidence="3">
    <location>
        <begin position="429"/>
        <end position="432"/>
    </location>
</feature>
<feature type="helix" evidence="3">
    <location>
        <begin position="433"/>
        <end position="435"/>
    </location>
</feature>
<feature type="strand" evidence="3">
    <location>
        <begin position="441"/>
        <end position="443"/>
    </location>
</feature>
<feature type="strand" evidence="3">
    <location>
        <begin position="449"/>
        <end position="452"/>
    </location>
</feature>
<feature type="turn" evidence="3">
    <location>
        <begin position="455"/>
        <end position="457"/>
    </location>
</feature>
<feature type="helix" evidence="3">
    <location>
        <begin position="458"/>
        <end position="462"/>
    </location>
</feature>
<feature type="strand" evidence="3">
    <location>
        <begin position="466"/>
        <end position="468"/>
    </location>
</feature>
<feature type="turn" evidence="3">
    <location>
        <begin position="473"/>
        <end position="475"/>
    </location>
</feature>
<feature type="helix" evidence="3">
    <location>
        <begin position="479"/>
        <end position="482"/>
    </location>
</feature>
<feature type="strand" evidence="3">
    <location>
        <begin position="483"/>
        <end position="485"/>
    </location>
</feature>
<gene>
    <name evidence="1" type="primary">gbpA</name>
    <name type="ordered locus">VIBHAR_04739</name>
</gene>
<accession>A7N3J0</accession>
<evidence type="ECO:0000255" key="1">
    <source>
        <dbReference type="HAMAP-Rule" id="MF_01905"/>
    </source>
</evidence>
<evidence type="ECO:0007829" key="2">
    <source>
        <dbReference type="PDB" id="8GUL"/>
    </source>
</evidence>
<evidence type="ECO:0007829" key="3">
    <source>
        <dbReference type="PDB" id="8GUM"/>
    </source>
</evidence>
<protein>
    <recommendedName>
        <fullName evidence="1">GlcNAc-binding protein A</fullName>
    </recommendedName>
</protein>
<keyword id="KW-0002">3D-structure</keyword>
<keyword id="KW-0147">Chitin-binding</keyword>
<keyword id="KW-0964">Secreted</keyword>
<keyword id="KW-0732">Signal</keyword>